<organism>
    <name type="scientific">Mucor circinelloides f. lusitanicus</name>
    <name type="common">Mucor racemosus var. lusitanicus</name>
    <dbReference type="NCBI Taxonomy" id="29924"/>
    <lineage>
        <taxon>Eukaryota</taxon>
        <taxon>Fungi</taxon>
        <taxon>Fungi incertae sedis</taxon>
        <taxon>Mucoromycota</taxon>
        <taxon>Mucoromycotina</taxon>
        <taxon>Mucoromycetes</taxon>
        <taxon>Mucorales</taxon>
        <taxon>Mucorineae</taxon>
        <taxon>Mucoraceae</taxon>
        <taxon>Mucor</taxon>
    </lineage>
</organism>
<sequence length="338" mass="35864">MVTQVGINGFGRIGRIVLRASLSNPEVQVVAINDPFIPLEYMVYMFKYDSVHGRFQGTVEAKDGKLVVNGKEISVFSERDPAQIPWGSVEAAYVVESTGVFTSIDAASAHLQGGAKKVIISAPSGDAPMFVCGVNLEKYTSDLKVISNASCTTNCLAPLAKVINDNFGIVEGLMTTVHATTATQKTVDGPSNKDWRGGRGAGANIIPSSTGAAKAVGKVIPELNGKLTGMAFRVPTPDVSVVDLTVRLEKGATYEEIKAVIKKASENELKGILGYTNDQVVSTDFVGDAQSSIFDAAAGIALNDKFVKLVSWYDNEFGYSNRVIDLLAYAAKVDAAAQ</sequence>
<accession>Q96UF2</accession>
<proteinExistence type="inferred from homology"/>
<protein>
    <recommendedName>
        <fullName>Glyceraldehyde-3-phosphate dehydrogenase 2</fullName>
        <shortName>GAPDH 2</shortName>
        <ecNumber>1.2.1.12</ecNumber>
    </recommendedName>
</protein>
<dbReference type="EC" id="1.2.1.12"/>
<dbReference type="EMBL" id="AJ293013">
    <property type="protein sequence ID" value="CAC37404.1"/>
    <property type="molecule type" value="Genomic_DNA"/>
</dbReference>
<dbReference type="SMR" id="Q96UF2"/>
<dbReference type="UniPathway" id="UPA00109">
    <property type="reaction ID" value="UER00184"/>
</dbReference>
<dbReference type="GO" id="GO:0005829">
    <property type="term" value="C:cytosol"/>
    <property type="evidence" value="ECO:0007669"/>
    <property type="project" value="TreeGrafter"/>
</dbReference>
<dbReference type="GO" id="GO:0004365">
    <property type="term" value="F:glyceraldehyde-3-phosphate dehydrogenase (NAD+) (phosphorylating) activity"/>
    <property type="evidence" value="ECO:0007669"/>
    <property type="project" value="UniProtKB-EC"/>
</dbReference>
<dbReference type="GO" id="GO:0051287">
    <property type="term" value="F:NAD binding"/>
    <property type="evidence" value="ECO:0007669"/>
    <property type="project" value="InterPro"/>
</dbReference>
<dbReference type="GO" id="GO:0050661">
    <property type="term" value="F:NADP binding"/>
    <property type="evidence" value="ECO:0007669"/>
    <property type="project" value="InterPro"/>
</dbReference>
<dbReference type="GO" id="GO:0006006">
    <property type="term" value="P:glucose metabolic process"/>
    <property type="evidence" value="ECO:0007669"/>
    <property type="project" value="InterPro"/>
</dbReference>
<dbReference type="GO" id="GO:0006096">
    <property type="term" value="P:glycolytic process"/>
    <property type="evidence" value="ECO:0007669"/>
    <property type="project" value="UniProtKB-UniPathway"/>
</dbReference>
<dbReference type="CDD" id="cd18126">
    <property type="entry name" value="GAPDH_I_C"/>
    <property type="match status" value="1"/>
</dbReference>
<dbReference type="CDD" id="cd05214">
    <property type="entry name" value="GAPDH_I_N"/>
    <property type="match status" value="1"/>
</dbReference>
<dbReference type="FunFam" id="3.30.360.10:FF:000001">
    <property type="entry name" value="Glyceraldehyde-3-phosphate dehydrogenase"/>
    <property type="match status" value="1"/>
</dbReference>
<dbReference type="FunFam" id="3.40.50.720:FF:000266">
    <property type="entry name" value="Glyceraldehyde-3-phosphate dehydrogenase"/>
    <property type="match status" value="1"/>
</dbReference>
<dbReference type="Gene3D" id="3.30.360.10">
    <property type="entry name" value="Dihydrodipicolinate Reductase, domain 2"/>
    <property type="match status" value="1"/>
</dbReference>
<dbReference type="Gene3D" id="3.40.50.720">
    <property type="entry name" value="NAD(P)-binding Rossmann-like Domain"/>
    <property type="match status" value="1"/>
</dbReference>
<dbReference type="InterPro" id="IPR020831">
    <property type="entry name" value="GlycerAld/Erythrose_P_DH"/>
</dbReference>
<dbReference type="InterPro" id="IPR020830">
    <property type="entry name" value="GlycerAld_3-P_DH_AS"/>
</dbReference>
<dbReference type="InterPro" id="IPR020829">
    <property type="entry name" value="GlycerAld_3-P_DH_cat"/>
</dbReference>
<dbReference type="InterPro" id="IPR020828">
    <property type="entry name" value="GlycerAld_3-P_DH_NAD(P)-bd"/>
</dbReference>
<dbReference type="InterPro" id="IPR006424">
    <property type="entry name" value="Glyceraldehyde-3-P_DH_1"/>
</dbReference>
<dbReference type="InterPro" id="IPR036291">
    <property type="entry name" value="NAD(P)-bd_dom_sf"/>
</dbReference>
<dbReference type="NCBIfam" id="TIGR01534">
    <property type="entry name" value="GAPDH-I"/>
    <property type="match status" value="1"/>
</dbReference>
<dbReference type="PANTHER" id="PTHR10836">
    <property type="entry name" value="GLYCERALDEHYDE 3-PHOSPHATE DEHYDROGENASE"/>
    <property type="match status" value="1"/>
</dbReference>
<dbReference type="PANTHER" id="PTHR10836:SF76">
    <property type="entry name" value="GLYCERALDEHYDE-3-PHOSPHATE DEHYDROGENASE-RELATED"/>
    <property type="match status" value="1"/>
</dbReference>
<dbReference type="Pfam" id="PF02800">
    <property type="entry name" value="Gp_dh_C"/>
    <property type="match status" value="1"/>
</dbReference>
<dbReference type="Pfam" id="PF00044">
    <property type="entry name" value="Gp_dh_N"/>
    <property type="match status" value="1"/>
</dbReference>
<dbReference type="PIRSF" id="PIRSF000149">
    <property type="entry name" value="GAP_DH"/>
    <property type="match status" value="1"/>
</dbReference>
<dbReference type="PRINTS" id="PR00078">
    <property type="entry name" value="G3PDHDRGNASE"/>
</dbReference>
<dbReference type="SMART" id="SM00846">
    <property type="entry name" value="Gp_dh_N"/>
    <property type="match status" value="1"/>
</dbReference>
<dbReference type="SUPFAM" id="SSF55347">
    <property type="entry name" value="Glyceraldehyde-3-phosphate dehydrogenase-like, C-terminal domain"/>
    <property type="match status" value="1"/>
</dbReference>
<dbReference type="SUPFAM" id="SSF51735">
    <property type="entry name" value="NAD(P)-binding Rossmann-fold domains"/>
    <property type="match status" value="1"/>
</dbReference>
<dbReference type="PROSITE" id="PS00071">
    <property type="entry name" value="GAPDH"/>
    <property type="match status" value="1"/>
</dbReference>
<feature type="chain" id="PRO_0000145577" description="Glyceraldehyde-3-phosphate dehydrogenase 2">
    <location>
        <begin position="1"/>
        <end position="338"/>
    </location>
</feature>
<feature type="active site" description="Nucleophile" evidence="2">
    <location>
        <position position="151"/>
    </location>
</feature>
<feature type="binding site" evidence="1">
    <location>
        <begin position="12"/>
        <end position="13"/>
    </location>
    <ligand>
        <name>NAD(+)</name>
        <dbReference type="ChEBI" id="CHEBI:57540"/>
    </ligand>
</feature>
<feature type="binding site" evidence="1">
    <location>
        <position position="34"/>
    </location>
    <ligand>
        <name>NAD(+)</name>
        <dbReference type="ChEBI" id="CHEBI:57540"/>
    </ligand>
</feature>
<feature type="binding site" evidence="1">
    <location>
        <position position="79"/>
    </location>
    <ligand>
        <name>NAD(+)</name>
        <dbReference type="ChEBI" id="CHEBI:57540"/>
    </ligand>
</feature>
<feature type="binding site" evidence="1">
    <location>
        <begin position="150"/>
        <end position="152"/>
    </location>
    <ligand>
        <name>D-glyceraldehyde 3-phosphate</name>
        <dbReference type="ChEBI" id="CHEBI:59776"/>
    </ligand>
</feature>
<feature type="binding site" evidence="1">
    <location>
        <position position="181"/>
    </location>
    <ligand>
        <name>D-glyceraldehyde 3-phosphate</name>
        <dbReference type="ChEBI" id="CHEBI:59776"/>
    </ligand>
</feature>
<feature type="binding site" evidence="1">
    <location>
        <begin position="210"/>
        <end position="211"/>
    </location>
    <ligand>
        <name>D-glyceraldehyde 3-phosphate</name>
        <dbReference type="ChEBI" id="CHEBI:59776"/>
    </ligand>
</feature>
<feature type="binding site" evidence="1">
    <location>
        <position position="233"/>
    </location>
    <ligand>
        <name>D-glyceraldehyde 3-phosphate</name>
        <dbReference type="ChEBI" id="CHEBI:59776"/>
    </ligand>
</feature>
<feature type="binding site" evidence="1">
    <location>
        <position position="315"/>
    </location>
    <ligand>
        <name>NAD(+)</name>
        <dbReference type="ChEBI" id="CHEBI:57540"/>
    </ligand>
</feature>
<feature type="site" description="Activates thiol group during catalysis" evidence="1">
    <location>
        <position position="178"/>
    </location>
</feature>
<comment type="catalytic activity">
    <reaction evidence="2">
        <text>D-glyceraldehyde 3-phosphate + phosphate + NAD(+) = (2R)-3-phospho-glyceroyl phosphate + NADH + H(+)</text>
        <dbReference type="Rhea" id="RHEA:10300"/>
        <dbReference type="ChEBI" id="CHEBI:15378"/>
        <dbReference type="ChEBI" id="CHEBI:43474"/>
        <dbReference type="ChEBI" id="CHEBI:57540"/>
        <dbReference type="ChEBI" id="CHEBI:57604"/>
        <dbReference type="ChEBI" id="CHEBI:57945"/>
        <dbReference type="ChEBI" id="CHEBI:59776"/>
        <dbReference type="EC" id="1.2.1.12"/>
    </reaction>
</comment>
<comment type="pathway">
    <text>Carbohydrate degradation; glycolysis; pyruvate from D-glyceraldehyde 3-phosphate: step 1/5.</text>
</comment>
<comment type="subunit">
    <text evidence="1">Homotetramer.</text>
</comment>
<comment type="subcellular location">
    <subcellularLocation>
        <location evidence="1">Cytoplasm</location>
    </subcellularLocation>
</comment>
<comment type="similarity">
    <text evidence="3">Belongs to the glyceraldehyde-3-phosphate dehydrogenase family.</text>
</comment>
<keyword id="KW-0963">Cytoplasm</keyword>
<keyword id="KW-0324">Glycolysis</keyword>
<keyword id="KW-0520">NAD</keyword>
<keyword id="KW-0560">Oxidoreductase</keyword>
<evidence type="ECO:0000250" key="1"/>
<evidence type="ECO:0000255" key="2">
    <source>
        <dbReference type="PROSITE-ProRule" id="PRU10009"/>
    </source>
</evidence>
<evidence type="ECO:0000305" key="3"/>
<name>G3P2_MUCCL</name>
<gene>
    <name type="primary">GPD2</name>
</gene>
<reference key="1">
    <citation type="journal article" date="2002" name="Fungal Genet. Biol.">
        <title>Cloning of glyceraldehyde-3-phosphate dehydrogenase-encoding genes in Mucor circinelloides (Syn. racemosus) and use of the gpd1 promoter for recombinant protein production.</title>
        <authorList>
            <person name="Wolff A.M."/>
            <person name="Arnau J."/>
        </authorList>
    </citation>
    <scope>NUCLEOTIDE SEQUENCE [GENOMIC DNA]</scope>
    <source>
        <strain>ATCC 90680 / R7B</strain>
    </source>
</reference>